<name>RL32_ACTP2</name>
<comment type="similarity">
    <text evidence="1">Belongs to the bacterial ribosomal protein bL32 family.</text>
</comment>
<sequence>MAVQQNKKSRSRRDMRRSHDALTTAAVSVDKTTGETHLRHHVTADGYYRGRKVINK</sequence>
<reference key="1">
    <citation type="journal article" date="2008" name="J. Bacteriol.">
        <title>The complete genome sequence of Actinobacillus pleuropneumoniae L20 (serotype 5b).</title>
        <authorList>
            <person name="Foote S.J."/>
            <person name="Bosse J.T."/>
            <person name="Bouevitch A.B."/>
            <person name="Langford P.R."/>
            <person name="Young N.M."/>
            <person name="Nash J.H.E."/>
        </authorList>
    </citation>
    <scope>NUCLEOTIDE SEQUENCE [LARGE SCALE GENOMIC DNA]</scope>
    <source>
        <strain>L20</strain>
    </source>
</reference>
<proteinExistence type="inferred from homology"/>
<organism>
    <name type="scientific">Actinobacillus pleuropneumoniae serotype 5b (strain L20)</name>
    <dbReference type="NCBI Taxonomy" id="416269"/>
    <lineage>
        <taxon>Bacteria</taxon>
        <taxon>Pseudomonadati</taxon>
        <taxon>Pseudomonadota</taxon>
        <taxon>Gammaproteobacteria</taxon>
        <taxon>Pasteurellales</taxon>
        <taxon>Pasteurellaceae</taxon>
        <taxon>Actinobacillus</taxon>
    </lineage>
</organism>
<feature type="chain" id="PRO_0000296413" description="Large ribosomal subunit protein bL32">
    <location>
        <begin position="1"/>
        <end position="56"/>
    </location>
</feature>
<feature type="region of interest" description="Disordered" evidence="2">
    <location>
        <begin position="1"/>
        <end position="37"/>
    </location>
</feature>
<feature type="compositionally biased region" description="Basic residues" evidence="2">
    <location>
        <begin position="7"/>
        <end position="16"/>
    </location>
</feature>
<protein>
    <recommendedName>
        <fullName evidence="1">Large ribosomal subunit protein bL32</fullName>
    </recommendedName>
    <alternativeName>
        <fullName evidence="3">50S ribosomal protein L32</fullName>
    </alternativeName>
</protein>
<accession>A3N234</accession>
<gene>
    <name evidence="1" type="primary">rpmF</name>
    <name type="ordered locus">APL_1386</name>
</gene>
<evidence type="ECO:0000255" key="1">
    <source>
        <dbReference type="HAMAP-Rule" id="MF_00340"/>
    </source>
</evidence>
<evidence type="ECO:0000256" key="2">
    <source>
        <dbReference type="SAM" id="MobiDB-lite"/>
    </source>
</evidence>
<evidence type="ECO:0000305" key="3"/>
<dbReference type="EMBL" id="CP000569">
    <property type="protein sequence ID" value="ABN74470.1"/>
    <property type="molecule type" value="Genomic_DNA"/>
</dbReference>
<dbReference type="RefSeq" id="WP_005598552.1">
    <property type="nucleotide sequence ID" value="NC_009053.1"/>
</dbReference>
<dbReference type="SMR" id="A3N234"/>
<dbReference type="STRING" id="416269.APL_1386"/>
<dbReference type="EnsemblBacteria" id="ABN74470">
    <property type="protein sequence ID" value="ABN74470"/>
    <property type="gene ID" value="APL_1386"/>
</dbReference>
<dbReference type="GeneID" id="92744027"/>
<dbReference type="KEGG" id="apl:APL_1386"/>
<dbReference type="eggNOG" id="COG0333">
    <property type="taxonomic scope" value="Bacteria"/>
</dbReference>
<dbReference type="HOGENOM" id="CLU_129084_2_1_6"/>
<dbReference type="Proteomes" id="UP000001432">
    <property type="component" value="Chromosome"/>
</dbReference>
<dbReference type="GO" id="GO:0015934">
    <property type="term" value="C:large ribosomal subunit"/>
    <property type="evidence" value="ECO:0007669"/>
    <property type="project" value="InterPro"/>
</dbReference>
<dbReference type="GO" id="GO:0003735">
    <property type="term" value="F:structural constituent of ribosome"/>
    <property type="evidence" value="ECO:0007669"/>
    <property type="project" value="InterPro"/>
</dbReference>
<dbReference type="GO" id="GO:0006412">
    <property type="term" value="P:translation"/>
    <property type="evidence" value="ECO:0007669"/>
    <property type="project" value="UniProtKB-UniRule"/>
</dbReference>
<dbReference type="Gene3D" id="1.20.5.640">
    <property type="entry name" value="Single helix bin"/>
    <property type="match status" value="1"/>
</dbReference>
<dbReference type="HAMAP" id="MF_00340">
    <property type="entry name" value="Ribosomal_bL32"/>
    <property type="match status" value="1"/>
</dbReference>
<dbReference type="InterPro" id="IPR002677">
    <property type="entry name" value="Ribosomal_bL32"/>
</dbReference>
<dbReference type="InterPro" id="IPR044957">
    <property type="entry name" value="Ribosomal_bL32_bact"/>
</dbReference>
<dbReference type="InterPro" id="IPR011332">
    <property type="entry name" value="Ribosomal_zn-bd"/>
</dbReference>
<dbReference type="NCBIfam" id="TIGR01031">
    <property type="entry name" value="rpmF_bact"/>
    <property type="match status" value="1"/>
</dbReference>
<dbReference type="PANTHER" id="PTHR35534">
    <property type="entry name" value="50S RIBOSOMAL PROTEIN L32"/>
    <property type="match status" value="1"/>
</dbReference>
<dbReference type="PANTHER" id="PTHR35534:SF1">
    <property type="entry name" value="LARGE RIBOSOMAL SUBUNIT PROTEIN BL32"/>
    <property type="match status" value="1"/>
</dbReference>
<dbReference type="Pfam" id="PF01783">
    <property type="entry name" value="Ribosomal_L32p"/>
    <property type="match status" value="1"/>
</dbReference>
<dbReference type="SUPFAM" id="SSF57829">
    <property type="entry name" value="Zn-binding ribosomal proteins"/>
    <property type="match status" value="1"/>
</dbReference>
<keyword id="KW-1185">Reference proteome</keyword>
<keyword id="KW-0687">Ribonucleoprotein</keyword>
<keyword id="KW-0689">Ribosomal protein</keyword>